<evidence type="ECO:0000250" key="1"/>
<evidence type="ECO:0000255" key="2">
    <source>
        <dbReference type="HAMAP-Rule" id="MF_01057"/>
    </source>
</evidence>
<organism>
    <name type="scientific">Yersinia pseudotuberculosis serotype I (strain IP32953)</name>
    <dbReference type="NCBI Taxonomy" id="273123"/>
    <lineage>
        <taxon>Bacteria</taxon>
        <taxon>Pseudomonadati</taxon>
        <taxon>Pseudomonadota</taxon>
        <taxon>Gammaproteobacteria</taxon>
        <taxon>Enterobacterales</taxon>
        <taxon>Yersiniaceae</taxon>
        <taxon>Yersinia</taxon>
    </lineage>
</organism>
<gene>
    <name evidence="2" type="primary">trmB</name>
    <name type="ordered locus">YPTB3223</name>
</gene>
<accession>Q666M5</accession>
<feature type="chain" id="PRO_0000171429" description="tRNA (guanine-N(7)-)-methyltransferase">
    <location>
        <begin position="1"/>
        <end position="239"/>
    </location>
</feature>
<feature type="region of interest" description="Interaction with RNA" evidence="2">
    <location>
        <begin position="150"/>
        <end position="155"/>
    </location>
</feature>
<feature type="active site" evidence="1">
    <location>
        <position position="144"/>
    </location>
</feature>
<feature type="binding site" evidence="2">
    <location>
        <position position="69"/>
    </location>
    <ligand>
        <name>S-adenosyl-L-methionine</name>
        <dbReference type="ChEBI" id="CHEBI:59789"/>
    </ligand>
</feature>
<feature type="binding site" evidence="2">
    <location>
        <position position="94"/>
    </location>
    <ligand>
        <name>S-adenosyl-L-methionine</name>
        <dbReference type="ChEBI" id="CHEBI:59789"/>
    </ligand>
</feature>
<feature type="binding site" evidence="2">
    <location>
        <position position="121"/>
    </location>
    <ligand>
        <name>S-adenosyl-L-methionine</name>
        <dbReference type="ChEBI" id="CHEBI:59789"/>
    </ligand>
</feature>
<feature type="binding site" evidence="2">
    <location>
        <position position="144"/>
    </location>
    <ligand>
        <name>S-adenosyl-L-methionine</name>
        <dbReference type="ChEBI" id="CHEBI:59789"/>
    </ligand>
</feature>
<feature type="binding site" evidence="2">
    <location>
        <position position="148"/>
    </location>
    <ligand>
        <name>substrate</name>
    </ligand>
</feature>
<feature type="binding site" evidence="2">
    <location>
        <position position="180"/>
    </location>
    <ligand>
        <name>substrate</name>
    </ligand>
</feature>
<feature type="binding site" evidence="2">
    <location>
        <begin position="217"/>
        <end position="220"/>
    </location>
    <ligand>
        <name>substrate</name>
    </ligand>
</feature>
<reference key="1">
    <citation type="journal article" date="2004" name="Proc. Natl. Acad. Sci. U.S.A.">
        <title>Insights into the evolution of Yersinia pestis through whole-genome comparison with Yersinia pseudotuberculosis.</title>
        <authorList>
            <person name="Chain P.S.G."/>
            <person name="Carniel E."/>
            <person name="Larimer F.W."/>
            <person name="Lamerdin J."/>
            <person name="Stoutland P.O."/>
            <person name="Regala W.M."/>
            <person name="Georgescu A.M."/>
            <person name="Vergez L.M."/>
            <person name="Land M.L."/>
            <person name="Motin V.L."/>
            <person name="Brubaker R.R."/>
            <person name="Fowler J."/>
            <person name="Hinnebusch J."/>
            <person name="Marceau M."/>
            <person name="Medigue C."/>
            <person name="Simonet M."/>
            <person name="Chenal-Francisque V."/>
            <person name="Souza B."/>
            <person name="Dacheux D."/>
            <person name="Elliott J.M."/>
            <person name="Derbise A."/>
            <person name="Hauser L.J."/>
            <person name="Garcia E."/>
        </authorList>
    </citation>
    <scope>NUCLEOTIDE SEQUENCE [LARGE SCALE GENOMIC DNA]</scope>
    <source>
        <strain>IP32953</strain>
    </source>
</reference>
<name>TRMB_YERPS</name>
<dbReference type="EC" id="2.1.1.33" evidence="2"/>
<dbReference type="EMBL" id="BX936398">
    <property type="protein sequence ID" value="CAH22461.1"/>
    <property type="molecule type" value="Genomic_DNA"/>
</dbReference>
<dbReference type="RefSeq" id="WP_011192981.1">
    <property type="nucleotide sequence ID" value="NC_006155.1"/>
</dbReference>
<dbReference type="SMR" id="Q666M5"/>
<dbReference type="GeneID" id="49784787"/>
<dbReference type="KEGG" id="ypo:BZ17_3387"/>
<dbReference type="KEGG" id="yps:YPTB3223"/>
<dbReference type="PATRIC" id="fig|273123.14.peg.3554"/>
<dbReference type="UniPathway" id="UPA00989"/>
<dbReference type="Proteomes" id="UP000001011">
    <property type="component" value="Chromosome"/>
</dbReference>
<dbReference type="GO" id="GO:0043527">
    <property type="term" value="C:tRNA methyltransferase complex"/>
    <property type="evidence" value="ECO:0007669"/>
    <property type="project" value="TreeGrafter"/>
</dbReference>
<dbReference type="GO" id="GO:0008176">
    <property type="term" value="F:tRNA (guanine(46)-N7)-methyltransferase activity"/>
    <property type="evidence" value="ECO:0007669"/>
    <property type="project" value="UniProtKB-UniRule"/>
</dbReference>
<dbReference type="FunFam" id="3.40.50.150:FF:000024">
    <property type="entry name" value="tRNA (guanine-N(7)-)-methyltransferase"/>
    <property type="match status" value="1"/>
</dbReference>
<dbReference type="Gene3D" id="3.40.50.150">
    <property type="entry name" value="Vaccinia Virus protein VP39"/>
    <property type="match status" value="1"/>
</dbReference>
<dbReference type="HAMAP" id="MF_01057">
    <property type="entry name" value="tRNA_methyltr_TrmB"/>
    <property type="match status" value="1"/>
</dbReference>
<dbReference type="InterPro" id="IPR029063">
    <property type="entry name" value="SAM-dependent_MTases_sf"/>
</dbReference>
<dbReference type="InterPro" id="IPR003358">
    <property type="entry name" value="tRNA_(Gua-N-7)_MeTrfase_Trmb"/>
</dbReference>
<dbReference type="InterPro" id="IPR055361">
    <property type="entry name" value="tRNA_methyltr_TrmB_bact"/>
</dbReference>
<dbReference type="NCBIfam" id="TIGR00091">
    <property type="entry name" value="tRNA (guanosine(46)-N7)-methyltransferase TrmB"/>
    <property type="match status" value="1"/>
</dbReference>
<dbReference type="PANTHER" id="PTHR23417">
    <property type="entry name" value="3-DEOXY-D-MANNO-OCTULOSONIC-ACID TRANSFERASE/TRNA GUANINE-N 7 - -METHYLTRANSFERASE"/>
    <property type="match status" value="1"/>
</dbReference>
<dbReference type="PANTHER" id="PTHR23417:SF14">
    <property type="entry name" value="PENTACOTRIPEPTIDE-REPEAT REGION OF PRORP DOMAIN-CONTAINING PROTEIN"/>
    <property type="match status" value="1"/>
</dbReference>
<dbReference type="Pfam" id="PF02390">
    <property type="entry name" value="Methyltransf_4"/>
    <property type="match status" value="1"/>
</dbReference>
<dbReference type="SUPFAM" id="SSF53335">
    <property type="entry name" value="S-adenosyl-L-methionine-dependent methyltransferases"/>
    <property type="match status" value="1"/>
</dbReference>
<dbReference type="PROSITE" id="PS51625">
    <property type="entry name" value="SAM_MT_TRMB"/>
    <property type="match status" value="1"/>
</dbReference>
<keyword id="KW-0489">Methyltransferase</keyword>
<keyword id="KW-0949">S-adenosyl-L-methionine</keyword>
<keyword id="KW-0808">Transferase</keyword>
<keyword id="KW-0819">tRNA processing</keyword>
<protein>
    <recommendedName>
        <fullName evidence="2">tRNA (guanine-N(7)-)-methyltransferase</fullName>
        <ecNumber evidence="2">2.1.1.33</ecNumber>
    </recommendedName>
    <alternativeName>
        <fullName evidence="2">tRNA (guanine(46)-N(7))-methyltransferase</fullName>
    </alternativeName>
    <alternativeName>
        <fullName evidence="2">tRNA(m7G46)-methyltransferase</fullName>
    </alternativeName>
</protein>
<sequence length="239" mass="26975">MINDVISPEFDENGRALRRIRSFVRRQGRLTKGQQLALDSYWPVMGVEYQAAPVDLNTLFGREAPVVLEIGFGMGTSLVTMAANNPQQNFLGIEVHSPGVGACLSSAHDAGLSNLRIMCHDAVEVLENMIPEASLDMVQLFFPDPWHKARHNKRRIVQTPFVELVKSKLKVGGVFHMATDWQPYAEHMLEVMSGVSGYLNLSEQNDYVPRPDSRPLTKFELRGQRLGHGVWDLMFERKE</sequence>
<proteinExistence type="inferred from homology"/>
<comment type="function">
    <text evidence="2">Catalyzes the formation of N(7)-methylguanine at position 46 (m7G46) in tRNA.</text>
</comment>
<comment type="catalytic activity">
    <reaction evidence="2">
        <text>guanosine(46) in tRNA + S-adenosyl-L-methionine = N(7)-methylguanosine(46) in tRNA + S-adenosyl-L-homocysteine</text>
        <dbReference type="Rhea" id="RHEA:42708"/>
        <dbReference type="Rhea" id="RHEA-COMP:10188"/>
        <dbReference type="Rhea" id="RHEA-COMP:10189"/>
        <dbReference type="ChEBI" id="CHEBI:57856"/>
        <dbReference type="ChEBI" id="CHEBI:59789"/>
        <dbReference type="ChEBI" id="CHEBI:74269"/>
        <dbReference type="ChEBI" id="CHEBI:74480"/>
        <dbReference type="EC" id="2.1.1.33"/>
    </reaction>
</comment>
<comment type="pathway">
    <text evidence="2">tRNA modification; N(7)-methylguanine-tRNA biosynthesis.</text>
</comment>
<comment type="subunit">
    <text evidence="2">Monomer.</text>
</comment>
<comment type="similarity">
    <text evidence="2">Belongs to the class I-like SAM-binding methyltransferase superfamily. TrmB family.</text>
</comment>